<sequence length="235" mass="27134">MVKTVNGEPLRHRPLQFNDIERVTEVSLLAFSDSATWKWRFKGMSSETMKALTMQLTRDAYFDPHVTCIVAYTDSNPYVGFLAFKKFPPDPNVSYRDWILKSLNKYYSNFLYWWYGAQIVQKRFHYNELQYGAALYKTGLLKNPKGFIHIHFVCVDPALQGNGVGGYLLDMAHDLADEYQIPCFLMASKMAFKMYEHLGYKTSVIANLVDEDTGELIRESPGMIREPKQPSSHET</sequence>
<accession>O14195</accession>
<dbReference type="EC" id="2.3.1.-"/>
<dbReference type="EMBL" id="CU329670">
    <property type="protein sequence ID" value="CAB16398.1"/>
    <property type="molecule type" value="Genomic_DNA"/>
</dbReference>
<dbReference type="PIR" id="T38909">
    <property type="entry name" value="T38909"/>
</dbReference>
<dbReference type="RefSeq" id="NP_593274.1">
    <property type="nucleotide sequence ID" value="NM_001018671.2"/>
</dbReference>
<dbReference type="SMR" id="O14195"/>
<dbReference type="BioGRID" id="279754">
    <property type="interactions" value="14"/>
</dbReference>
<dbReference type="iPTMnet" id="O14195"/>
<dbReference type="PaxDb" id="4896-SPAC56E4.07.1"/>
<dbReference type="EnsemblFungi" id="SPAC56E4.07.1">
    <property type="protein sequence ID" value="SPAC56E4.07.1:pep"/>
    <property type="gene ID" value="SPAC56E4.07"/>
</dbReference>
<dbReference type="KEGG" id="spo:2543331"/>
<dbReference type="PomBase" id="SPAC56E4.07"/>
<dbReference type="VEuPathDB" id="FungiDB:SPAC56E4.07"/>
<dbReference type="eggNOG" id="ENOG502RR34">
    <property type="taxonomic scope" value="Eukaryota"/>
</dbReference>
<dbReference type="HOGENOM" id="CLU_1190475_0_0_1"/>
<dbReference type="InParanoid" id="O14195"/>
<dbReference type="OMA" id="WWYDAGA"/>
<dbReference type="PhylomeDB" id="O14195"/>
<dbReference type="PRO" id="PR:O14195"/>
<dbReference type="Proteomes" id="UP000002485">
    <property type="component" value="Chromosome I"/>
</dbReference>
<dbReference type="GO" id="GO:0005783">
    <property type="term" value="C:endoplasmic reticulum"/>
    <property type="evidence" value="ECO:0007005"/>
    <property type="project" value="PomBase"/>
</dbReference>
<dbReference type="GO" id="GO:0005789">
    <property type="term" value="C:endoplasmic reticulum membrane"/>
    <property type="evidence" value="ECO:0007669"/>
    <property type="project" value="UniProtKB-SubCell"/>
</dbReference>
<dbReference type="GO" id="GO:0005794">
    <property type="term" value="C:Golgi apparatus"/>
    <property type="evidence" value="ECO:0007005"/>
    <property type="project" value="PomBase"/>
</dbReference>
<dbReference type="GO" id="GO:0000139">
    <property type="term" value="C:Golgi membrane"/>
    <property type="evidence" value="ECO:0007669"/>
    <property type="project" value="UniProtKB-SubCell"/>
</dbReference>
<dbReference type="GO" id="GO:0016747">
    <property type="term" value="F:acyltransferase activity, transferring groups other than amino-acyl groups"/>
    <property type="evidence" value="ECO:0007669"/>
    <property type="project" value="InterPro"/>
</dbReference>
<dbReference type="CDD" id="cd04301">
    <property type="entry name" value="NAT_SF"/>
    <property type="match status" value="1"/>
</dbReference>
<dbReference type="Gene3D" id="3.40.630.30">
    <property type="match status" value="1"/>
</dbReference>
<dbReference type="InterPro" id="IPR016181">
    <property type="entry name" value="Acyl_CoA_acyltransferase"/>
</dbReference>
<dbReference type="InterPro" id="IPR000182">
    <property type="entry name" value="GNAT_dom"/>
</dbReference>
<dbReference type="InterPro" id="IPR052523">
    <property type="entry name" value="Trichothecene_AcTrans"/>
</dbReference>
<dbReference type="PANTHER" id="PTHR42791">
    <property type="entry name" value="GNAT FAMILY ACETYLTRANSFERASE"/>
    <property type="match status" value="1"/>
</dbReference>
<dbReference type="PANTHER" id="PTHR42791:SF1">
    <property type="entry name" value="N-ACETYLTRANSFERASE DOMAIN-CONTAINING PROTEIN"/>
    <property type="match status" value="1"/>
</dbReference>
<dbReference type="Pfam" id="PF13673">
    <property type="entry name" value="Acetyltransf_10"/>
    <property type="match status" value="1"/>
</dbReference>
<dbReference type="SUPFAM" id="SSF55729">
    <property type="entry name" value="Acyl-CoA N-acyltransferases (Nat)"/>
    <property type="match status" value="1"/>
</dbReference>
<dbReference type="PROSITE" id="PS51186">
    <property type="entry name" value="GNAT"/>
    <property type="match status" value="1"/>
</dbReference>
<name>YF07_SCHPO</name>
<evidence type="ECO:0000255" key="1">
    <source>
        <dbReference type="PROSITE-ProRule" id="PRU00532"/>
    </source>
</evidence>
<evidence type="ECO:0000269" key="2">
    <source>
    </source>
</evidence>
<evidence type="ECO:0000305" key="3"/>
<gene>
    <name type="ORF">SPAC56E4.07</name>
</gene>
<proteinExistence type="inferred from homology"/>
<feature type="chain" id="PRO_0000310296" description="Uncharacterized N-acetyltransferase C56E4.07">
    <location>
        <begin position="1"/>
        <end position="235"/>
    </location>
</feature>
<feature type="domain" description="N-acetyltransferase" evidence="1">
    <location>
        <begin position="82"/>
        <end position="221"/>
    </location>
</feature>
<keyword id="KW-0012">Acyltransferase</keyword>
<keyword id="KW-0256">Endoplasmic reticulum</keyword>
<keyword id="KW-0333">Golgi apparatus</keyword>
<keyword id="KW-0472">Membrane</keyword>
<keyword id="KW-1185">Reference proteome</keyword>
<keyword id="KW-0808">Transferase</keyword>
<protein>
    <recommendedName>
        <fullName>Uncharacterized N-acetyltransferase C56E4.07</fullName>
        <ecNumber>2.3.1.-</ecNumber>
    </recommendedName>
</protein>
<comment type="subcellular location">
    <subcellularLocation>
        <location evidence="2">Golgi apparatus membrane</location>
        <topology evidence="2">Peripheral membrane protein</topology>
    </subcellularLocation>
    <subcellularLocation>
        <location evidence="2">Endoplasmic reticulum membrane</location>
        <topology evidence="2">Peripheral membrane protein</topology>
    </subcellularLocation>
</comment>
<comment type="similarity">
    <text evidence="3">Belongs to the acetyltransferase family.</text>
</comment>
<organism>
    <name type="scientific">Schizosaccharomyces pombe (strain 972 / ATCC 24843)</name>
    <name type="common">Fission yeast</name>
    <dbReference type="NCBI Taxonomy" id="284812"/>
    <lineage>
        <taxon>Eukaryota</taxon>
        <taxon>Fungi</taxon>
        <taxon>Dikarya</taxon>
        <taxon>Ascomycota</taxon>
        <taxon>Taphrinomycotina</taxon>
        <taxon>Schizosaccharomycetes</taxon>
        <taxon>Schizosaccharomycetales</taxon>
        <taxon>Schizosaccharomycetaceae</taxon>
        <taxon>Schizosaccharomyces</taxon>
    </lineage>
</organism>
<reference key="1">
    <citation type="journal article" date="2002" name="Nature">
        <title>The genome sequence of Schizosaccharomyces pombe.</title>
        <authorList>
            <person name="Wood V."/>
            <person name="Gwilliam R."/>
            <person name="Rajandream M.A."/>
            <person name="Lyne M.H."/>
            <person name="Lyne R."/>
            <person name="Stewart A."/>
            <person name="Sgouros J.G."/>
            <person name="Peat N."/>
            <person name="Hayles J."/>
            <person name="Baker S.G."/>
            <person name="Basham D."/>
            <person name="Bowman S."/>
            <person name="Brooks K."/>
            <person name="Brown D."/>
            <person name="Brown S."/>
            <person name="Chillingworth T."/>
            <person name="Churcher C.M."/>
            <person name="Collins M."/>
            <person name="Connor R."/>
            <person name="Cronin A."/>
            <person name="Davis P."/>
            <person name="Feltwell T."/>
            <person name="Fraser A."/>
            <person name="Gentles S."/>
            <person name="Goble A."/>
            <person name="Hamlin N."/>
            <person name="Harris D.E."/>
            <person name="Hidalgo J."/>
            <person name="Hodgson G."/>
            <person name="Holroyd S."/>
            <person name="Hornsby T."/>
            <person name="Howarth S."/>
            <person name="Huckle E.J."/>
            <person name="Hunt S."/>
            <person name="Jagels K."/>
            <person name="James K.D."/>
            <person name="Jones L."/>
            <person name="Jones M."/>
            <person name="Leather S."/>
            <person name="McDonald S."/>
            <person name="McLean J."/>
            <person name="Mooney P."/>
            <person name="Moule S."/>
            <person name="Mungall K.L."/>
            <person name="Murphy L.D."/>
            <person name="Niblett D."/>
            <person name="Odell C."/>
            <person name="Oliver K."/>
            <person name="O'Neil S."/>
            <person name="Pearson D."/>
            <person name="Quail M.A."/>
            <person name="Rabbinowitsch E."/>
            <person name="Rutherford K.M."/>
            <person name="Rutter S."/>
            <person name="Saunders D."/>
            <person name="Seeger K."/>
            <person name="Sharp S."/>
            <person name="Skelton J."/>
            <person name="Simmonds M.N."/>
            <person name="Squares R."/>
            <person name="Squares S."/>
            <person name="Stevens K."/>
            <person name="Taylor K."/>
            <person name="Taylor R.G."/>
            <person name="Tivey A."/>
            <person name="Walsh S.V."/>
            <person name="Warren T."/>
            <person name="Whitehead S."/>
            <person name="Woodward J.R."/>
            <person name="Volckaert G."/>
            <person name="Aert R."/>
            <person name="Robben J."/>
            <person name="Grymonprez B."/>
            <person name="Weltjens I."/>
            <person name="Vanstreels E."/>
            <person name="Rieger M."/>
            <person name="Schaefer M."/>
            <person name="Mueller-Auer S."/>
            <person name="Gabel C."/>
            <person name="Fuchs M."/>
            <person name="Duesterhoeft A."/>
            <person name="Fritzc C."/>
            <person name="Holzer E."/>
            <person name="Moestl D."/>
            <person name="Hilbert H."/>
            <person name="Borzym K."/>
            <person name="Langer I."/>
            <person name="Beck A."/>
            <person name="Lehrach H."/>
            <person name="Reinhardt R."/>
            <person name="Pohl T.M."/>
            <person name="Eger P."/>
            <person name="Zimmermann W."/>
            <person name="Wedler H."/>
            <person name="Wambutt R."/>
            <person name="Purnelle B."/>
            <person name="Goffeau A."/>
            <person name="Cadieu E."/>
            <person name="Dreano S."/>
            <person name="Gloux S."/>
            <person name="Lelaure V."/>
            <person name="Mottier S."/>
            <person name="Galibert F."/>
            <person name="Aves S.J."/>
            <person name="Xiang Z."/>
            <person name="Hunt C."/>
            <person name="Moore K."/>
            <person name="Hurst S.M."/>
            <person name="Lucas M."/>
            <person name="Rochet M."/>
            <person name="Gaillardin C."/>
            <person name="Tallada V.A."/>
            <person name="Garzon A."/>
            <person name="Thode G."/>
            <person name="Daga R.R."/>
            <person name="Cruzado L."/>
            <person name="Jimenez J."/>
            <person name="Sanchez M."/>
            <person name="del Rey F."/>
            <person name="Benito J."/>
            <person name="Dominguez A."/>
            <person name="Revuelta J.L."/>
            <person name="Moreno S."/>
            <person name="Armstrong J."/>
            <person name="Forsburg S.L."/>
            <person name="Cerutti L."/>
            <person name="Lowe T."/>
            <person name="McCombie W.R."/>
            <person name="Paulsen I."/>
            <person name="Potashkin J."/>
            <person name="Shpakovski G.V."/>
            <person name="Ussery D."/>
            <person name="Barrell B.G."/>
            <person name="Nurse P."/>
        </authorList>
    </citation>
    <scope>NUCLEOTIDE SEQUENCE [LARGE SCALE GENOMIC DNA]</scope>
    <source>
        <strain>972 / ATCC 24843</strain>
    </source>
</reference>
<reference key="2">
    <citation type="journal article" date="2006" name="Nat. Biotechnol.">
        <title>ORFeome cloning and global analysis of protein localization in the fission yeast Schizosaccharomyces pombe.</title>
        <authorList>
            <person name="Matsuyama A."/>
            <person name="Arai R."/>
            <person name="Yashiroda Y."/>
            <person name="Shirai A."/>
            <person name="Kamata A."/>
            <person name="Sekido S."/>
            <person name="Kobayashi Y."/>
            <person name="Hashimoto A."/>
            <person name="Hamamoto M."/>
            <person name="Hiraoka Y."/>
            <person name="Horinouchi S."/>
            <person name="Yoshida M."/>
        </authorList>
    </citation>
    <scope>SUBCELLULAR LOCATION [LARGE SCALE ANALYSIS]</scope>
</reference>